<organism>
    <name type="scientific">Lacticaseibacillus paracasei (strain ATCC 334 / BCRC 17002 / CCUG 31169 / CIP 107868 / KCTC 3260 / NRRL B-441)</name>
    <name type="common">Lactobacillus paracasei</name>
    <dbReference type="NCBI Taxonomy" id="321967"/>
    <lineage>
        <taxon>Bacteria</taxon>
        <taxon>Bacillati</taxon>
        <taxon>Bacillota</taxon>
        <taxon>Bacilli</taxon>
        <taxon>Lactobacillales</taxon>
        <taxon>Lactobacillaceae</taxon>
        <taxon>Lacticaseibacillus</taxon>
    </lineage>
</organism>
<keyword id="KW-0143">Chaperone</keyword>
<keyword id="KW-0963">Cytoplasm</keyword>
<keyword id="KW-1015">Disulfide bond</keyword>
<keyword id="KW-0676">Redox-active center</keyword>
<keyword id="KW-1185">Reference proteome</keyword>
<keyword id="KW-0862">Zinc</keyword>
<evidence type="ECO:0000255" key="1">
    <source>
        <dbReference type="HAMAP-Rule" id="MF_00117"/>
    </source>
</evidence>
<accession>Q034W5</accession>
<protein>
    <recommendedName>
        <fullName evidence="1">33 kDa chaperonin</fullName>
    </recommendedName>
    <alternativeName>
        <fullName evidence="1">Heat shock protein 33 homolog</fullName>
        <shortName evidence="1">HSP33</shortName>
    </alternativeName>
</protein>
<comment type="function">
    <text evidence="1">Redox regulated molecular chaperone. Protects both thermally unfolding and oxidatively damaged proteins from irreversible aggregation. Plays an important role in the bacterial defense system toward oxidative stress.</text>
</comment>
<comment type="subcellular location">
    <subcellularLocation>
        <location evidence="1">Cytoplasm</location>
    </subcellularLocation>
</comment>
<comment type="PTM">
    <text evidence="1">Under oxidizing conditions two disulfide bonds are formed involving the reactive cysteines. Under reducing conditions zinc is bound to the reactive cysteines and the protein is inactive.</text>
</comment>
<comment type="similarity">
    <text evidence="1">Belongs to the HSP33 family.</text>
</comment>
<proteinExistence type="inferred from homology"/>
<sequence>MSDYIASALSRDEHFRIFAADATQTVREAQRRHDTWSASSAALGRALVATALLAASGLKNADDMLTVRIKGDGPVGALVTDGTNVGTVRGYVEEPHVNLPLNLVGKIDVARAVGKRGLLAVTKDIGVGDPFTGQVPLVSGELAEDFTYYLAKSEQIPAAVGLSVFVNADNTIQVAGGFMLQALPGANDAELSELEANVKTLPLVSELLKSGLTPKQIIQRIAGDEPVQFLDAQPLKFACNCSKEHFGDIMATLPHAQLQEMIDQDGGAETTCKFCGNQYHYTVADLEALMTRHE</sequence>
<name>HSLO_LACP3</name>
<feature type="chain" id="PRO_1000015546" description="33 kDa chaperonin">
    <location>
        <begin position="1"/>
        <end position="294"/>
    </location>
</feature>
<feature type="disulfide bond" description="Redox-active" evidence="1">
    <location>
        <begin position="239"/>
        <end position="241"/>
    </location>
</feature>
<feature type="disulfide bond" description="Redox-active" evidence="1">
    <location>
        <begin position="272"/>
        <end position="275"/>
    </location>
</feature>
<dbReference type="EMBL" id="CP000423">
    <property type="protein sequence ID" value="ABJ71257.1"/>
    <property type="molecule type" value="Genomic_DNA"/>
</dbReference>
<dbReference type="RefSeq" id="WP_011674924.1">
    <property type="nucleotide sequence ID" value="NC_008526.1"/>
</dbReference>
<dbReference type="RefSeq" id="YP_807699.1">
    <property type="nucleotide sequence ID" value="NC_008526.1"/>
</dbReference>
<dbReference type="SMR" id="Q034W5"/>
<dbReference type="STRING" id="321967.LSEI_2534"/>
<dbReference type="PaxDb" id="321967-LSEI_2534"/>
<dbReference type="KEGG" id="lca:LSEI_2534"/>
<dbReference type="PATRIC" id="fig|321967.11.peg.2475"/>
<dbReference type="HOGENOM" id="CLU_054493_1_0_9"/>
<dbReference type="Proteomes" id="UP000001651">
    <property type="component" value="Chromosome"/>
</dbReference>
<dbReference type="GO" id="GO:0005737">
    <property type="term" value="C:cytoplasm"/>
    <property type="evidence" value="ECO:0007669"/>
    <property type="project" value="UniProtKB-SubCell"/>
</dbReference>
<dbReference type="GO" id="GO:0044183">
    <property type="term" value="F:protein folding chaperone"/>
    <property type="evidence" value="ECO:0007669"/>
    <property type="project" value="TreeGrafter"/>
</dbReference>
<dbReference type="GO" id="GO:0051082">
    <property type="term" value="F:unfolded protein binding"/>
    <property type="evidence" value="ECO:0007669"/>
    <property type="project" value="UniProtKB-UniRule"/>
</dbReference>
<dbReference type="GO" id="GO:0042026">
    <property type="term" value="P:protein refolding"/>
    <property type="evidence" value="ECO:0007669"/>
    <property type="project" value="TreeGrafter"/>
</dbReference>
<dbReference type="CDD" id="cd00498">
    <property type="entry name" value="Hsp33"/>
    <property type="match status" value="1"/>
</dbReference>
<dbReference type="Gene3D" id="3.55.30.10">
    <property type="entry name" value="Hsp33 domain"/>
    <property type="match status" value="1"/>
</dbReference>
<dbReference type="Gene3D" id="3.90.1280.10">
    <property type="entry name" value="HSP33 redox switch-like"/>
    <property type="match status" value="1"/>
</dbReference>
<dbReference type="HAMAP" id="MF_00117">
    <property type="entry name" value="HslO"/>
    <property type="match status" value="1"/>
</dbReference>
<dbReference type="InterPro" id="IPR000397">
    <property type="entry name" value="Heat_shock_Hsp33"/>
</dbReference>
<dbReference type="InterPro" id="IPR016154">
    <property type="entry name" value="Heat_shock_Hsp33_C"/>
</dbReference>
<dbReference type="InterPro" id="IPR016153">
    <property type="entry name" value="Heat_shock_Hsp33_N"/>
</dbReference>
<dbReference type="NCBIfam" id="NF001033">
    <property type="entry name" value="PRK00114.1"/>
    <property type="match status" value="1"/>
</dbReference>
<dbReference type="PANTHER" id="PTHR30111">
    <property type="entry name" value="33 KDA CHAPERONIN"/>
    <property type="match status" value="1"/>
</dbReference>
<dbReference type="PANTHER" id="PTHR30111:SF1">
    <property type="entry name" value="33 KDA CHAPERONIN"/>
    <property type="match status" value="1"/>
</dbReference>
<dbReference type="Pfam" id="PF01430">
    <property type="entry name" value="HSP33"/>
    <property type="match status" value="1"/>
</dbReference>
<dbReference type="PIRSF" id="PIRSF005261">
    <property type="entry name" value="Heat_shock_Hsp33"/>
    <property type="match status" value="1"/>
</dbReference>
<dbReference type="SUPFAM" id="SSF64397">
    <property type="entry name" value="Hsp33 domain"/>
    <property type="match status" value="1"/>
</dbReference>
<dbReference type="SUPFAM" id="SSF118352">
    <property type="entry name" value="HSP33 redox switch-like"/>
    <property type="match status" value="1"/>
</dbReference>
<gene>
    <name evidence="1" type="primary">hslO</name>
    <name type="ordered locus">LSEI_2534</name>
</gene>
<reference key="1">
    <citation type="journal article" date="2006" name="Proc. Natl. Acad. Sci. U.S.A.">
        <title>Comparative genomics of the lactic acid bacteria.</title>
        <authorList>
            <person name="Makarova K.S."/>
            <person name="Slesarev A."/>
            <person name="Wolf Y.I."/>
            <person name="Sorokin A."/>
            <person name="Mirkin B."/>
            <person name="Koonin E.V."/>
            <person name="Pavlov A."/>
            <person name="Pavlova N."/>
            <person name="Karamychev V."/>
            <person name="Polouchine N."/>
            <person name="Shakhova V."/>
            <person name="Grigoriev I."/>
            <person name="Lou Y."/>
            <person name="Rohksar D."/>
            <person name="Lucas S."/>
            <person name="Huang K."/>
            <person name="Goodstein D.M."/>
            <person name="Hawkins T."/>
            <person name="Plengvidhya V."/>
            <person name="Welker D."/>
            <person name="Hughes J."/>
            <person name="Goh Y."/>
            <person name="Benson A."/>
            <person name="Baldwin K."/>
            <person name="Lee J.-H."/>
            <person name="Diaz-Muniz I."/>
            <person name="Dosti B."/>
            <person name="Smeianov V."/>
            <person name="Wechter W."/>
            <person name="Barabote R."/>
            <person name="Lorca G."/>
            <person name="Altermann E."/>
            <person name="Barrangou R."/>
            <person name="Ganesan B."/>
            <person name="Xie Y."/>
            <person name="Rawsthorne H."/>
            <person name="Tamir D."/>
            <person name="Parker C."/>
            <person name="Breidt F."/>
            <person name="Broadbent J.R."/>
            <person name="Hutkins R."/>
            <person name="O'Sullivan D."/>
            <person name="Steele J."/>
            <person name="Unlu G."/>
            <person name="Saier M.H. Jr."/>
            <person name="Klaenhammer T."/>
            <person name="Richardson P."/>
            <person name="Kozyavkin S."/>
            <person name="Weimer B.C."/>
            <person name="Mills D.A."/>
        </authorList>
    </citation>
    <scope>NUCLEOTIDE SEQUENCE [LARGE SCALE GENOMIC DNA]</scope>
    <source>
        <strain>ATCC 334 / BCRC 17002 / CCUG 31169 / CIP 107868 / KCTC 3260 / NRRL B-441</strain>
    </source>
</reference>